<dbReference type="EMBL" id="CR858881">
    <property type="protein sequence ID" value="CAH91080.1"/>
    <property type="molecule type" value="mRNA"/>
</dbReference>
<dbReference type="RefSeq" id="NP_001125627.1">
    <property type="nucleotide sequence ID" value="NM_001132155.1"/>
</dbReference>
<dbReference type="SMR" id="Q5RAY0"/>
<dbReference type="STRING" id="9601.ENSPPYP00000005219"/>
<dbReference type="GeneID" id="100172545"/>
<dbReference type="KEGG" id="pon:100172545"/>
<dbReference type="CTD" id="5204"/>
<dbReference type="eggNOG" id="KOG3048">
    <property type="taxonomic scope" value="Eukaryota"/>
</dbReference>
<dbReference type="InParanoid" id="Q5RAY0"/>
<dbReference type="OrthoDB" id="10267474at2759"/>
<dbReference type="Proteomes" id="UP000001595">
    <property type="component" value="Unplaced"/>
</dbReference>
<dbReference type="GO" id="GO:0005737">
    <property type="term" value="C:cytoplasm"/>
    <property type="evidence" value="ECO:0007669"/>
    <property type="project" value="TreeGrafter"/>
</dbReference>
<dbReference type="GO" id="GO:0005634">
    <property type="term" value="C:nucleus"/>
    <property type="evidence" value="ECO:0007669"/>
    <property type="project" value="UniProtKB-SubCell"/>
</dbReference>
<dbReference type="GO" id="GO:0016272">
    <property type="term" value="C:prefoldin complex"/>
    <property type="evidence" value="ECO:0007669"/>
    <property type="project" value="InterPro"/>
</dbReference>
<dbReference type="GO" id="GO:0051082">
    <property type="term" value="F:unfolded protein binding"/>
    <property type="evidence" value="ECO:0007669"/>
    <property type="project" value="InterPro"/>
</dbReference>
<dbReference type="GO" id="GO:0006457">
    <property type="term" value="P:protein folding"/>
    <property type="evidence" value="ECO:0007669"/>
    <property type="project" value="InterPro"/>
</dbReference>
<dbReference type="GO" id="GO:1990113">
    <property type="term" value="P:RNA polymerase I assembly"/>
    <property type="evidence" value="ECO:0007669"/>
    <property type="project" value="TreeGrafter"/>
</dbReference>
<dbReference type="GO" id="GO:1990114">
    <property type="term" value="P:RNA polymerase II core complex assembly"/>
    <property type="evidence" value="ECO:0007669"/>
    <property type="project" value="TreeGrafter"/>
</dbReference>
<dbReference type="GO" id="GO:1990115">
    <property type="term" value="P:RNA polymerase III assembly"/>
    <property type="evidence" value="ECO:0007669"/>
    <property type="project" value="TreeGrafter"/>
</dbReference>
<dbReference type="CDD" id="cd23157">
    <property type="entry name" value="Prefoldin_5"/>
    <property type="match status" value="1"/>
</dbReference>
<dbReference type="FunFam" id="1.10.287.370:FF:000004">
    <property type="entry name" value="Probable prefoldin subunit 5"/>
    <property type="match status" value="1"/>
</dbReference>
<dbReference type="Gene3D" id="1.10.287.370">
    <property type="match status" value="1"/>
</dbReference>
<dbReference type="HAMAP" id="MF_00308">
    <property type="entry name" value="PfdA"/>
    <property type="match status" value="1"/>
</dbReference>
<dbReference type="InterPro" id="IPR011599">
    <property type="entry name" value="PFD_alpha_archaea"/>
</dbReference>
<dbReference type="InterPro" id="IPR009053">
    <property type="entry name" value="Prefoldin"/>
</dbReference>
<dbReference type="InterPro" id="IPR004127">
    <property type="entry name" value="Prefoldin_subunit_alpha"/>
</dbReference>
<dbReference type="NCBIfam" id="TIGR00293">
    <property type="entry name" value="prefoldin subunit alpha"/>
    <property type="match status" value="1"/>
</dbReference>
<dbReference type="PANTHER" id="PTHR12674">
    <property type="entry name" value="PREFOLDIN SUBUNIT 5"/>
    <property type="match status" value="1"/>
</dbReference>
<dbReference type="PANTHER" id="PTHR12674:SF2">
    <property type="entry name" value="PREFOLDIN SUBUNIT 5"/>
    <property type="match status" value="1"/>
</dbReference>
<dbReference type="Pfam" id="PF02996">
    <property type="entry name" value="Prefoldin"/>
    <property type="match status" value="1"/>
</dbReference>
<dbReference type="SUPFAM" id="SSF46579">
    <property type="entry name" value="Prefoldin"/>
    <property type="match status" value="1"/>
</dbReference>
<proteinExistence type="evidence at transcript level"/>
<gene>
    <name type="primary">PFDN5</name>
</gene>
<comment type="function">
    <text evidence="1">Binds specifically to cytosolic chaperonin (c-CPN) and transfers target proteins to it. Binds to nascent polypeptide chain and promotes folding in an environment in which there are many competing pathways for nonnative proteins. Represses the transcriptional activity of MYC (By similarity).</text>
</comment>
<comment type="subunit">
    <text evidence="1">Heterohexamer of two PFD-alpha type and four PFD-beta type subunits.</text>
</comment>
<comment type="subcellular location">
    <subcellularLocation>
        <location evidence="1">Nucleus</location>
    </subcellularLocation>
</comment>
<comment type="similarity">
    <text evidence="3">Belongs to the prefoldin subunit alpha family.</text>
</comment>
<reference key="1">
    <citation type="submission" date="2004-11" db="EMBL/GenBank/DDBJ databases">
        <authorList>
            <consortium name="The German cDNA consortium"/>
        </authorList>
    </citation>
    <scope>NUCLEOTIDE SEQUENCE [LARGE SCALE MRNA]</scope>
    <source>
        <tissue>Kidney</tissue>
    </source>
</reference>
<accession>Q5RAY0</accession>
<protein>
    <recommendedName>
        <fullName>Prefoldin subunit 5</fullName>
    </recommendedName>
</protein>
<name>PFD5_PONAB</name>
<feature type="initiator methionine" description="Removed" evidence="2">
    <location>
        <position position="1"/>
    </location>
</feature>
<feature type="chain" id="PRO_0000153663" description="Prefoldin subunit 5">
    <location>
        <begin position="2"/>
        <end position="154"/>
    </location>
</feature>
<feature type="modified residue" description="N-acetylalanine" evidence="2">
    <location>
        <position position="2"/>
    </location>
</feature>
<feature type="modified residue" description="N6-acetyllysine" evidence="2">
    <location>
        <position position="42"/>
    </location>
</feature>
<feature type="modified residue" description="Phosphoserine" evidence="2">
    <location>
        <position position="56"/>
    </location>
</feature>
<evidence type="ECO:0000250" key="1"/>
<evidence type="ECO:0000250" key="2">
    <source>
        <dbReference type="UniProtKB" id="Q99471"/>
    </source>
</evidence>
<evidence type="ECO:0000305" key="3"/>
<sequence>MAQSINITELNLPQLEMLKNQLDQEVEFLSTSIAQLKVVQTKYVEAKDCLNVLNKSNEGKELLVPLTSSMYVPGKLHDVEHVLIDVGTGYYVEKTAEDAKDFFKRKIDFLTKQMEKIQPALQEKHAMKQAVMEMMSQKIRQLTALGAAQATAKA</sequence>
<organism>
    <name type="scientific">Pongo abelii</name>
    <name type="common">Sumatran orangutan</name>
    <name type="synonym">Pongo pygmaeus abelii</name>
    <dbReference type="NCBI Taxonomy" id="9601"/>
    <lineage>
        <taxon>Eukaryota</taxon>
        <taxon>Metazoa</taxon>
        <taxon>Chordata</taxon>
        <taxon>Craniata</taxon>
        <taxon>Vertebrata</taxon>
        <taxon>Euteleostomi</taxon>
        <taxon>Mammalia</taxon>
        <taxon>Eutheria</taxon>
        <taxon>Euarchontoglires</taxon>
        <taxon>Primates</taxon>
        <taxon>Haplorrhini</taxon>
        <taxon>Catarrhini</taxon>
        <taxon>Hominidae</taxon>
        <taxon>Pongo</taxon>
    </lineage>
</organism>
<keyword id="KW-0007">Acetylation</keyword>
<keyword id="KW-0143">Chaperone</keyword>
<keyword id="KW-0539">Nucleus</keyword>
<keyword id="KW-0597">Phosphoprotein</keyword>
<keyword id="KW-1185">Reference proteome</keyword>